<dbReference type="EMBL" id="BX950851">
    <property type="protein sequence ID" value="CAG76894.1"/>
    <property type="molecule type" value="Genomic_DNA"/>
</dbReference>
<dbReference type="RefSeq" id="WP_011095491.1">
    <property type="nucleotide sequence ID" value="NC_004547.2"/>
</dbReference>
<dbReference type="SMR" id="Q6D004"/>
<dbReference type="STRING" id="218491.ECA3997"/>
<dbReference type="DNASU" id="2884379"/>
<dbReference type="KEGG" id="eca:ECA3997"/>
<dbReference type="PATRIC" id="fig|218491.5.peg.4063"/>
<dbReference type="eggNOG" id="COG2922">
    <property type="taxonomic scope" value="Bacteria"/>
</dbReference>
<dbReference type="HOGENOM" id="CLU_133242_0_0_6"/>
<dbReference type="OrthoDB" id="9788984at2"/>
<dbReference type="Proteomes" id="UP000007966">
    <property type="component" value="Chromosome"/>
</dbReference>
<dbReference type="HAMAP" id="MF_00598">
    <property type="entry name" value="Smg"/>
    <property type="match status" value="1"/>
</dbReference>
<dbReference type="InterPro" id="IPR007456">
    <property type="entry name" value="Smg"/>
</dbReference>
<dbReference type="NCBIfam" id="NF002897">
    <property type="entry name" value="PRK03430.1"/>
    <property type="match status" value="1"/>
</dbReference>
<dbReference type="PANTHER" id="PTHR38692">
    <property type="entry name" value="PROTEIN SMG"/>
    <property type="match status" value="1"/>
</dbReference>
<dbReference type="PANTHER" id="PTHR38692:SF1">
    <property type="entry name" value="PROTEIN SMG"/>
    <property type="match status" value="1"/>
</dbReference>
<dbReference type="Pfam" id="PF04361">
    <property type="entry name" value="DUF494"/>
    <property type="match status" value="1"/>
</dbReference>
<protein>
    <recommendedName>
        <fullName evidence="1">Protein Smg</fullName>
    </recommendedName>
</protein>
<feature type="chain" id="PRO_0000209171" description="Protein Smg">
    <location>
        <begin position="1"/>
        <end position="157"/>
    </location>
</feature>
<comment type="similarity">
    <text evidence="1">Belongs to the Smg family.</text>
</comment>
<accession>Q6D004</accession>
<reference key="1">
    <citation type="journal article" date="2004" name="Proc. Natl. Acad. Sci. U.S.A.">
        <title>Genome sequence of the enterobacterial phytopathogen Erwinia carotovora subsp. atroseptica and characterization of virulence factors.</title>
        <authorList>
            <person name="Bell K.S."/>
            <person name="Sebaihia M."/>
            <person name="Pritchard L."/>
            <person name="Holden M.T.G."/>
            <person name="Hyman L.J."/>
            <person name="Holeva M.C."/>
            <person name="Thomson N.R."/>
            <person name="Bentley S.D."/>
            <person name="Churcher L.J.C."/>
            <person name="Mungall K."/>
            <person name="Atkin R."/>
            <person name="Bason N."/>
            <person name="Brooks K."/>
            <person name="Chillingworth T."/>
            <person name="Clark K."/>
            <person name="Doggett J."/>
            <person name="Fraser A."/>
            <person name="Hance Z."/>
            <person name="Hauser H."/>
            <person name="Jagels K."/>
            <person name="Moule S."/>
            <person name="Norbertczak H."/>
            <person name="Ormond D."/>
            <person name="Price C."/>
            <person name="Quail M.A."/>
            <person name="Sanders M."/>
            <person name="Walker D."/>
            <person name="Whitehead S."/>
            <person name="Salmond G.P.C."/>
            <person name="Birch P.R.J."/>
            <person name="Parkhill J."/>
            <person name="Toth I.K."/>
        </authorList>
    </citation>
    <scope>NUCLEOTIDE SEQUENCE [LARGE SCALE GENOMIC DNA]</scope>
    <source>
        <strain>SCRI 1043 / ATCC BAA-672</strain>
    </source>
</reference>
<gene>
    <name evidence="1" type="primary">smg</name>
    <name type="ordered locus">ECA3997</name>
</gene>
<sequence>MFDVLMYLFESYIHNETEMRVDQDTLTDDLTRAGFHRNDIYSALSWLEKLADIQEGQTAPLYLASDPLAMRIYTQDEELRLDAECRGFLLFLEQMQVLNLETREMIIERVMALETQEFDLEDLKWVILMVLFNVPGCENAYQQMEELLFEVNDGYVQ</sequence>
<keyword id="KW-1185">Reference proteome</keyword>
<name>SMG_PECAS</name>
<evidence type="ECO:0000255" key="1">
    <source>
        <dbReference type="HAMAP-Rule" id="MF_00598"/>
    </source>
</evidence>
<organism>
    <name type="scientific">Pectobacterium atrosepticum (strain SCRI 1043 / ATCC BAA-672)</name>
    <name type="common">Erwinia carotovora subsp. atroseptica</name>
    <dbReference type="NCBI Taxonomy" id="218491"/>
    <lineage>
        <taxon>Bacteria</taxon>
        <taxon>Pseudomonadati</taxon>
        <taxon>Pseudomonadota</taxon>
        <taxon>Gammaproteobacteria</taxon>
        <taxon>Enterobacterales</taxon>
        <taxon>Pectobacteriaceae</taxon>
        <taxon>Pectobacterium</taxon>
    </lineage>
</organism>
<proteinExistence type="inferred from homology"/>